<proteinExistence type="evidence at protein level"/>
<accession>O46382</accession>
<reference key="1">
    <citation type="journal article" date="1997" name="Proc. Natl. Acad. Sci. U.S.A.">
        <title>Cloning and expression of a cDNA encoding a bovine brain brefeldin A-sensitive guanine nucleotide-exchange protein for ADP-ribosylation factor.</title>
        <authorList>
            <person name="Morinaga N."/>
            <person name="Moss J."/>
            <person name="Vaughan M."/>
        </authorList>
    </citation>
    <scope>NUCLEOTIDE SEQUENCE [MRNA]</scope>
    <source>
        <tissue>Brain</tissue>
    </source>
</reference>
<reference key="2">
    <citation type="journal article" date="1996" name="Proc. Natl. Acad. Sci. U.S.A.">
        <title>Isolation of a brefeldin A-inhibited guanine nucleotide-exchange protein for ADP ribosylation factor (ARF) 1 and ARF3 that contains a Sec7-like domain.</title>
        <authorList>
            <person name="Morinaga N."/>
            <person name="Tsai S.-C."/>
            <person name="Moss J."/>
            <person name="Vaughan M."/>
        </authorList>
    </citation>
    <scope>PARTIAL PROTEIN SEQUENCE</scope>
    <scope>CHARACTERIZATION</scope>
    <source>
        <tissue>Brain</tissue>
    </source>
</reference>
<gene>
    <name type="primary">ARFGEF1</name>
    <name type="synonym">ARFGEP1</name>
    <name type="synonym">BIG1</name>
</gene>
<feature type="chain" id="PRO_0000120206" description="Brefeldin A-inhibited guanine nucleotide-exchange protein 1">
    <location>
        <begin position="1"/>
        <end position="1849"/>
    </location>
</feature>
<feature type="domain" description="SEC7" evidence="5">
    <location>
        <begin position="709"/>
        <end position="840"/>
    </location>
</feature>
<feature type="region of interest" description="DCB; DCB:DCB and DCB:HUS domain interaction" evidence="1">
    <location>
        <begin position="2"/>
        <end position="224"/>
    </location>
</feature>
<feature type="region of interest" description="Disordered" evidence="6">
    <location>
        <begin position="46"/>
        <end position="65"/>
    </location>
</feature>
<feature type="region of interest" description="Disordered" evidence="6">
    <location>
        <begin position="216"/>
        <end position="301"/>
    </location>
</feature>
<feature type="region of interest" description="Disordered" evidence="6">
    <location>
        <begin position="350"/>
        <end position="413"/>
    </location>
</feature>
<feature type="region of interest" description="HUS; DCB:HUS domain interaction" evidence="1">
    <location>
        <begin position="557"/>
        <end position="577"/>
    </location>
</feature>
<feature type="region of interest" description="Disordered" evidence="6">
    <location>
        <begin position="634"/>
        <end position="687"/>
    </location>
</feature>
<feature type="short sequence motif" description="Nuclear localization signal (NLS)" evidence="1">
    <location>
        <begin position="711"/>
        <end position="715"/>
    </location>
</feature>
<feature type="compositionally biased region" description="Basic and acidic residues" evidence="6">
    <location>
        <begin position="46"/>
        <end position="58"/>
    </location>
</feature>
<feature type="compositionally biased region" description="Polar residues" evidence="6">
    <location>
        <begin position="350"/>
        <end position="360"/>
    </location>
</feature>
<feature type="compositionally biased region" description="Polar residues" evidence="6">
    <location>
        <begin position="394"/>
        <end position="409"/>
    </location>
</feature>
<feature type="compositionally biased region" description="Basic and acidic residues" evidence="6">
    <location>
        <begin position="644"/>
        <end position="658"/>
    </location>
</feature>
<feature type="compositionally biased region" description="Low complexity" evidence="6">
    <location>
        <begin position="664"/>
        <end position="684"/>
    </location>
</feature>
<feature type="modified residue" description="Phosphoserine" evidence="4">
    <location>
        <position position="52"/>
    </location>
</feature>
<feature type="modified residue" description="Phosphoserine" evidence="3">
    <location>
        <position position="286"/>
    </location>
</feature>
<feature type="modified residue" description="Phosphoserine" evidence="3">
    <location>
        <position position="289"/>
    </location>
</feature>
<feature type="modified residue" description="Phosphoserine" evidence="2">
    <location>
        <position position="290"/>
    </location>
</feature>
<feature type="modified residue" description="Phosphoserine" evidence="4">
    <location>
        <position position="397"/>
    </location>
</feature>
<feature type="modified residue" description="Phosphoserine" evidence="4">
    <location>
        <position position="410"/>
    </location>
</feature>
<feature type="modified residue" description="Phosphoserine" evidence="4">
    <location>
        <position position="1079"/>
    </location>
</feature>
<feature type="modified residue" description="Phosphoserine" evidence="2">
    <location>
        <position position="1566"/>
    </location>
</feature>
<feature type="modified residue" description="Phosphoserine" evidence="4">
    <location>
        <position position="1569"/>
    </location>
</feature>
<organism>
    <name type="scientific">Bos taurus</name>
    <name type="common">Bovine</name>
    <dbReference type="NCBI Taxonomy" id="9913"/>
    <lineage>
        <taxon>Eukaryota</taxon>
        <taxon>Metazoa</taxon>
        <taxon>Chordata</taxon>
        <taxon>Craniata</taxon>
        <taxon>Vertebrata</taxon>
        <taxon>Euteleostomi</taxon>
        <taxon>Mammalia</taxon>
        <taxon>Eutheria</taxon>
        <taxon>Laurasiatheria</taxon>
        <taxon>Artiodactyla</taxon>
        <taxon>Ruminantia</taxon>
        <taxon>Pecora</taxon>
        <taxon>Bovidae</taxon>
        <taxon>Bovinae</taxon>
        <taxon>Bos</taxon>
    </lineage>
</organism>
<protein>
    <recommendedName>
        <fullName>Brefeldin A-inhibited guanine nucleotide-exchange protein 1</fullName>
        <shortName>Brefeldin A-inhibited GEP 1</shortName>
    </recommendedName>
    <alternativeName>
        <fullName>ADP-ribosylation factor guanine nucleotide-exchange factor 1</fullName>
    </alternativeName>
    <alternativeName>
        <fullName>p200 ARF guanine nucleotide exchange factor</fullName>
    </alternativeName>
    <alternativeName>
        <fullName>p200 ARF-GEP1</fullName>
    </alternativeName>
</protein>
<dbReference type="EMBL" id="AF023451">
    <property type="protein sequence ID" value="AAC48782.1"/>
    <property type="molecule type" value="mRNA"/>
</dbReference>
<dbReference type="PIR" id="T14096">
    <property type="entry name" value="T14096"/>
</dbReference>
<dbReference type="RefSeq" id="NP_776422.1">
    <property type="nucleotide sequence ID" value="NM_173997.2"/>
</dbReference>
<dbReference type="SMR" id="O46382"/>
<dbReference type="FunCoup" id="O46382">
    <property type="interactions" value="3708"/>
</dbReference>
<dbReference type="STRING" id="9913.ENSBTAP00000019553"/>
<dbReference type="PaxDb" id="9913-ENSBTAP00000019553"/>
<dbReference type="GeneID" id="281022"/>
<dbReference type="KEGG" id="bta:281022"/>
<dbReference type="CTD" id="10565"/>
<dbReference type="eggNOG" id="KOG0929">
    <property type="taxonomic scope" value="Eukaryota"/>
</dbReference>
<dbReference type="InParanoid" id="O46382"/>
<dbReference type="OrthoDB" id="18431at2759"/>
<dbReference type="Proteomes" id="UP000009136">
    <property type="component" value="Unplaced"/>
</dbReference>
<dbReference type="GO" id="GO:0005829">
    <property type="term" value="C:cytosol"/>
    <property type="evidence" value="ECO:0000250"/>
    <property type="project" value="UniProtKB"/>
</dbReference>
<dbReference type="GO" id="GO:0000139">
    <property type="term" value="C:Golgi membrane"/>
    <property type="evidence" value="ECO:0000250"/>
    <property type="project" value="UniProtKB"/>
</dbReference>
<dbReference type="GO" id="GO:0016363">
    <property type="term" value="C:nuclear matrix"/>
    <property type="evidence" value="ECO:0007669"/>
    <property type="project" value="UniProtKB-SubCell"/>
</dbReference>
<dbReference type="GO" id="GO:0005730">
    <property type="term" value="C:nucleolus"/>
    <property type="evidence" value="ECO:0000250"/>
    <property type="project" value="UniProtKB"/>
</dbReference>
<dbReference type="GO" id="GO:0048471">
    <property type="term" value="C:perinuclear region of cytoplasm"/>
    <property type="evidence" value="ECO:0007669"/>
    <property type="project" value="UniProtKB-SubCell"/>
</dbReference>
<dbReference type="GO" id="GO:0030532">
    <property type="term" value="C:small nuclear ribonucleoprotein complex"/>
    <property type="evidence" value="ECO:0000250"/>
    <property type="project" value="UniProtKB"/>
</dbReference>
<dbReference type="GO" id="GO:0005802">
    <property type="term" value="C:trans-Golgi network"/>
    <property type="evidence" value="ECO:0000250"/>
    <property type="project" value="UniProtKB"/>
</dbReference>
<dbReference type="GO" id="GO:0005085">
    <property type="term" value="F:guanyl-nucleotide exchange factor activity"/>
    <property type="evidence" value="ECO:0007669"/>
    <property type="project" value="UniProtKB-KW"/>
</dbReference>
<dbReference type="GO" id="GO:0034237">
    <property type="term" value="F:protein kinase A regulatory subunit binding"/>
    <property type="evidence" value="ECO:0000250"/>
    <property type="project" value="UniProtKB"/>
</dbReference>
<dbReference type="GO" id="GO:0010256">
    <property type="term" value="P:endomembrane system organization"/>
    <property type="evidence" value="ECO:0000250"/>
    <property type="project" value="UniProtKB"/>
</dbReference>
<dbReference type="GO" id="GO:0007030">
    <property type="term" value="P:Golgi organization"/>
    <property type="evidence" value="ECO:0000250"/>
    <property type="project" value="UniProtKB"/>
</dbReference>
<dbReference type="GO" id="GO:0030837">
    <property type="term" value="P:negative regulation of actin filament polymerization"/>
    <property type="evidence" value="ECO:0000250"/>
    <property type="project" value="UniProtKB"/>
</dbReference>
<dbReference type="GO" id="GO:0034260">
    <property type="term" value="P:negative regulation of GTPase activity"/>
    <property type="evidence" value="ECO:0000250"/>
    <property type="project" value="UniProtKB"/>
</dbReference>
<dbReference type="GO" id="GO:0090303">
    <property type="term" value="P:positive regulation of wound healing"/>
    <property type="evidence" value="ECO:0000250"/>
    <property type="project" value="UniProtKB"/>
</dbReference>
<dbReference type="GO" id="GO:0006486">
    <property type="term" value="P:protein glycosylation"/>
    <property type="evidence" value="ECO:0000250"/>
    <property type="project" value="UniProtKB"/>
</dbReference>
<dbReference type="GO" id="GO:0015031">
    <property type="term" value="P:protein transport"/>
    <property type="evidence" value="ECO:0007669"/>
    <property type="project" value="UniProtKB-KW"/>
</dbReference>
<dbReference type="GO" id="GO:0032012">
    <property type="term" value="P:regulation of ARF protein signal transduction"/>
    <property type="evidence" value="ECO:0007669"/>
    <property type="project" value="InterPro"/>
</dbReference>
<dbReference type="GO" id="GO:2000114">
    <property type="term" value="P:regulation of establishment of cell polarity"/>
    <property type="evidence" value="ECO:0000250"/>
    <property type="project" value="UniProtKB"/>
</dbReference>
<dbReference type="CDD" id="cd00171">
    <property type="entry name" value="Sec7"/>
    <property type="match status" value="1"/>
</dbReference>
<dbReference type="FunFam" id="1.25.10.10:FF:000143">
    <property type="entry name" value="ADP-ribosylation factor guanine nucleotide-exchange factor 2 (brefeldin A-inhibited)"/>
    <property type="match status" value="1"/>
</dbReference>
<dbReference type="FunFam" id="1.10.1000.11:FF:000003">
    <property type="entry name" value="Brefeldin A-inhibited guanine nucleotide-exchange protein 1"/>
    <property type="match status" value="1"/>
</dbReference>
<dbReference type="FunFam" id="1.10.220.20:FF:000002">
    <property type="entry name" value="Brefeldin A-inhibited guanine nucleotide-exchange protein 1"/>
    <property type="match status" value="1"/>
</dbReference>
<dbReference type="Gene3D" id="1.10.220.20">
    <property type="match status" value="1"/>
</dbReference>
<dbReference type="Gene3D" id="1.10.1000.11">
    <property type="entry name" value="Arf Nucleotide-binding Site Opener,domain 2"/>
    <property type="match status" value="1"/>
</dbReference>
<dbReference type="InterPro" id="IPR016024">
    <property type="entry name" value="ARM-type_fold"/>
</dbReference>
<dbReference type="InterPro" id="IPR032629">
    <property type="entry name" value="DCB_dom"/>
</dbReference>
<dbReference type="InterPro" id="IPR015403">
    <property type="entry name" value="Mon2/Sec7/BIG1-like_HDS"/>
</dbReference>
<dbReference type="InterPro" id="IPR032691">
    <property type="entry name" value="Mon2/Sec7/BIG1-like_HUS"/>
</dbReference>
<dbReference type="InterPro" id="IPR046455">
    <property type="entry name" value="Sec7/BIG1-like_C"/>
</dbReference>
<dbReference type="InterPro" id="IPR023394">
    <property type="entry name" value="Sec7_C_sf"/>
</dbReference>
<dbReference type="InterPro" id="IPR000904">
    <property type="entry name" value="Sec7_dom"/>
</dbReference>
<dbReference type="InterPro" id="IPR035999">
    <property type="entry name" value="Sec7_dom_sf"/>
</dbReference>
<dbReference type="PANTHER" id="PTHR10663:SF137">
    <property type="entry name" value="BREFELDIN A-INHIBITED GUANINE NUCLEOTIDE-EXCHANGE PROTEIN 1"/>
    <property type="match status" value="1"/>
</dbReference>
<dbReference type="PANTHER" id="PTHR10663">
    <property type="entry name" value="GUANYL-NUCLEOTIDE EXCHANGE FACTOR"/>
    <property type="match status" value="1"/>
</dbReference>
<dbReference type="Pfam" id="PF20252">
    <property type="entry name" value="BIG2_C"/>
    <property type="match status" value="1"/>
</dbReference>
<dbReference type="Pfam" id="PF16213">
    <property type="entry name" value="DCB"/>
    <property type="match status" value="1"/>
</dbReference>
<dbReference type="Pfam" id="PF01369">
    <property type="entry name" value="Sec7"/>
    <property type="match status" value="1"/>
</dbReference>
<dbReference type="Pfam" id="PF09324">
    <property type="entry name" value="Sec7-like_HDS"/>
    <property type="match status" value="1"/>
</dbReference>
<dbReference type="Pfam" id="PF12783">
    <property type="entry name" value="Sec7-like_HUS"/>
    <property type="match status" value="1"/>
</dbReference>
<dbReference type="SMART" id="SM00222">
    <property type="entry name" value="Sec7"/>
    <property type="match status" value="1"/>
</dbReference>
<dbReference type="SUPFAM" id="SSF48371">
    <property type="entry name" value="ARM repeat"/>
    <property type="match status" value="1"/>
</dbReference>
<dbReference type="SUPFAM" id="SSF48425">
    <property type="entry name" value="Sec7 domain"/>
    <property type="match status" value="1"/>
</dbReference>
<dbReference type="PROSITE" id="PS50190">
    <property type="entry name" value="SEC7"/>
    <property type="match status" value="1"/>
</dbReference>
<name>BIG1_BOVIN</name>
<sequence length="1849" mass="208712">MYEGKKTKNMFLTRALEKILADKEVKKAHHSQLRKACEVALEEIKAETEKQSPPHGEAKAGSSTLPPVKSKTNFIEADKYFLPFELACQSKCPRIVSTSLDCLQKLIAYGHLTGNAPDSTTPGKKLIDRIIETICGCFQGPQTDEGVQLQIIKALLTAVTSQHIEIHEGTVLQAVRTCYNIYLASKNLINQTTAKATLTQMLNVIFARMENQALQEAKQMEKERHRQHHHLLQSPVSHHEPESPQLRYLPPQTVDHIPQEHEGDLDPQTNDVDKSLQDDTEPENGSDISSAENEQTEADQATAAETLSKNDILYDGENHDCEEKPQDIVQSIVEEMVNIVVGDTGERTTINVSADGNNGTIEDGSDSENIQANGIPGTPISVAYTPSLPDDRLSVSSNDTQESGNSSGPSPGAKFSHILQKDAFLVFRSLCKLSMKPLSDGPPDPKSHELRSKILSLQLLLSILQNAGPIFGTNEMFINAIKQYLCVALSKNGVSSVPEVFELSLSIFLTLLSNFKTHLKMQIEVFFKEIFLYILETSTSSFDHKWMVIQTLTRICADAQSVVDIYVNYDCDLNAANIFERLVNDLSKIAQGRGSQELGMSNVQELSLRKKGLECLVSILKCMVEWSKDQYVNPNSQTTLGQEKPSEQETSEMKHPETINRYGSLNSLESTSSSGIGSYSTQMSGTDNPEQFEVLKQQKEIIEQGIDLFTKKPKRGIQYLQEQGMLGTTPEDIAQFLHQEERLDSTQVGEFLGDNDKFNKEVMYAYVDQHDFSGKDFVSALRMFLEGFRLPGEAQKIDRLMEKFAARYLECNQGQTLFASADTAYVLAYSIIMLTTDLHSPQVKNKMTKEQYIKMNRGINDSKDLPEEYLSAIYNEIAGKKISMKETKELTIPAKSSKQNVASEKQRRLLYNLEMEQMAKTAKALMEAVSHVQAPFTSATHLEHVRPMFKLAWTPFLAAFSVGLQDCDDTEVASLCLEGIRCAIRIACIFSIQLERDAYVQALARFTLLTVSSGITEMKQKNIDTIKTLITVAHTDGNYLGNSWHEILKCISQLELAQLIGTGVKPRYISGTVRGREGSLTGAKDQAPDEFVGLGLVGGNVDWKQIASIQESIGETSSQSVVVAVDRIFTGSTRLDGNAIVDFVRWLCAVSMDELLSTTHPRMFSLQKIVEISYYNMGRIRLQWSRIWEVIGDHFNKVGCNPNEDVAIFAVDSLRQLSMKFLEKGELANFRFQKDFLRPFEHIMKRNRSPTIRDMVVRCIAQMVNSQAANIRSGWKNIFSVFHLAASDQDESIVELAFQTTGHIVTLVFEKHFPATIDSFQDAVKCLSEFACNAAFPDTSMEAIRLIRHCAKYVSDRPQAFKEYTSDDMNVAPEDRVWVRGWFPILFELSCIINRCKLDVRTRGLTVMFEIMKTYGYTYEKHWWQDLFRIVFRIFDNMKLPEQQTEKAEWMTTTCNHALYAICDVFTQYLEVLSDVLLDDIFAQLYWCVQQDNEQLARSGTNCLENVVILNGEKFTLEIWDKTCNCTLDIFKTTIPHALLTWRPISGETAPPTPSPVSENQLDTISQKSVDIHDSIQPRSADNRQQAPLASVSTVNEEISKIKPTAKFPEQKLFAALLIKCVVQLELIQTIDNIVFFPATSRKEDAENLAAAQRDAVDFDVRVDTQDQGMYRFLTSQQLFKLLDCLLESHRFAKAFNSNNEQRTALWKAGFKGKSKPNLLKQETSSLACGLRILFRMYTDESRASAWEEVQQRLLNVCSEALSYFLTLTSESHREAWTNLLLLFLTKVLKISDNRFKAHASFYYPLLCEIMQFDLIPELRAVLRRFFLRIGVVFQISQPPEQELGINKQ</sequence>
<keyword id="KW-0963">Cytoplasm</keyword>
<keyword id="KW-0903">Direct protein sequencing</keyword>
<keyword id="KW-0333">Golgi apparatus</keyword>
<keyword id="KW-0344">Guanine-nucleotide releasing factor</keyword>
<keyword id="KW-0472">Membrane</keyword>
<keyword id="KW-0539">Nucleus</keyword>
<keyword id="KW-0597">Phosphoprotein</keyword>
<keyword id="KW-0653">Protein transport</keyword>
<keyword id="KW-1185">Reference proteome</keyword>
<keyword id="KW-0813">Transport</keyword>
<comment type="function">
    <text evidence="1">Promotes guanine-nucleotide exchange on ARF1 and ARF3. Promotes the activation of ARF1/ARF3 through replacement of GDP with GTP. Involved in vesicular trafficking. Required for the maintenance of Golgi structure; the function may be independent of its GEF activity. Required for the maturation of integrin beta-1 in the Golgi. Involved in the establishment and persistence of cell polarity during directed cell movement in wound healing. Proposed to act as A kinase-anchoring protein (AKAP) and may mediate crosstalk between Arf and PKA pathways. Inhibits GAP activity of MYO9B probably through competitive RhoA binding. The function in the nucleus remains to be determined (By similarity).</text>
</comment>
<comment type="activity regulation">
    <text>Inhibited by brefeldin A.</text>
</comment>
<comment type="subunit">
    <text evidence="4">Homodimer. Interacts with ARFGEF2/BIG2; both proteins are probably part of the same or very similar macromolecular complexes. Interacts with FKBP2. Interacts with MYO9B. Interacts with PRKAR1A and PRKAR2A. Interacts with PPP1CC. Interacts with NCL, FBL, NUP62 and U3 small nucleolar RNA. Interacts with DPY30. Interacts with PDE3A. Interacts with KANK1. Interacts with TBC1D22A and TBC1D22B.</text>
</comment>
<comment type="subcellular location">
    <subcellularLocation>
        <location evidence="1">Cytoplasm</location>
    </subcellularLocation>
    <subcellularLocation>
        <location evidence="1">Cytoplasm</location>
        <location evidence="1">Perinuclear region</location>
    </subcellularLocation>
    <subcellularLocation>
        <location evidence="1">Golgi apparatus</location>
    </subcellularLocation>
    <subcellularLocation>
        <location evidence="1">Golgi apparatus</location>
        <location evidence="1">trans-Golgi network</location>
    </subcellularLocation>
    <subcellularLocation>
        <location evidence="1">Nucleus</location>
    </subcellularLocation>
    <subcellularLocation>
        <location evidence="1">Nucleus</location>
        <location evidence="1">Nucleolus</location>
    </subcellularLocation>
    <subcellularLocation>
        <location evidence="1">Nucleus matrix</location>
    </subcellularLocation>
    <subcellularLocation>
        <location evidence="1">Membrane</location>
    </subcellularLocation>
    <text evidence="1">Translocates from cytoplasm to membranes and nucleus upon cAMP treatment.</text>
</comment>
<comment type="tissue specificity">
    <text>Abundantly expressed in kidney, somewhat less abundant in lung, spleen, and brain, and still less abundant in heart.</text>
</comment>
<comment type="PTM">
    <text evidence="1">Phosphorylated. In vitro phosphorylated by PKA reducing its GEF activity and dephosphorylated by phosphatase PP1 (By similarity).</text>
</comment>
<evidence type="ECO:0000250" key="1"/>
<evidence type="ECO:0000250" key="2">
    <source>
        <dbReference type="UniProtKB" id="D4A631"/>
    </source>
</evidence>
<evidence type="ECO:0000250" key="3">
    <source>
        <dbReference type="UniProtKB" id="G3X9K3"/>
    </source>
</evidence>
<evidence type="ECO:0000250" key="4">
    <source>
        <dbReference type="UniProtKB" id="Q9Y6D6"/>
    </source>
</evidence>
<evidence type="ECO:0000255" key="5">
    <source>
        <dbReference type="PROSITE-ProRule" id="PRU00189"/>
    </source>
</evidence>
<evidence type="ECO:0000256" key="6">
    <source>
        <dbReference type="SAM" id="MobiDB-lite"/>
    </source>
</evidence>